<accession>Q8U085</accession>
<comment type="function">
    <text evidence="1">Large subunit of the glutamine-dependent carbamoyl phosphate synthetase (CPSase). CPSase catalyzes the formation of carbamoyl phosphate from the ammonia moiety of glutamine, carbonate, and phosphate donated by ATP, constituting the first step of 2 biosynthetic pathways, one leading to arginine and/or urea and the other to pyrimidine nucleotides. The large subunit (synthetase) binds the substrates ammonia (free or transferred from glutamine from the small subunit), hydrogencarbonate and ATP and carries out an ATP-coupled ligase reaction, activating hydrogencarbonate by forming carboxy phosphate which reacts with ammonia to form carbamoyl phosphate.</text>
</comment>
<comment type="catalytic activity">
    <reaction evidence="1">
        <text>hydrogencarbonate + L-glutamine + 2 ATP + H2O = carbamoyl phosphate + L-glutamate + 2 ADP + phosphate + 2 H(+)</text>
        <dbReference type="Rhea" id="RHEA:18633"/>
        <dbReference type="ChEBI" id="CHEBI:15377"/>
        <dbReference type="ChEBI" id="CHEBI:15378"/>
        <dbReference type="ChEBI" id="CHEBI:17544"/>
        <dbReference type="ChEBI" id="CHEBI:29985"/>
        <dbReference type="ChEBI" id="CHEBI:30616"/>
        <dbReference type="ChEBI" id="CHEBI:43474"/>
        <dbReference type="ChEBI" id="CHEBI:58228"/>
        <dbReference type="ChEBI" id="CHEBI:58359"/>
        <dbReference type="ChEBI" id="CHEBI:456216"/>
        <dbReference type="EC" id="6.3.5.5"/>
    </reaction>
</comment>
<comment type="catalytic activity">
    <molecule>Carbamoyl phosphate synthase large chain</molecule>
    <reaction evidence="1">
        <text>hydrogencarbonate + NH4(+) + 2 ATP = carbamoyl phosphate + 2 ADP + phosphate + 2 H(+)</text>
        <dbReference type="Rhea" id="RHEA:18029"/>
        <dbReference type="ChEBI" id="CHEBI:15378"/>
        <dbReference type="ChEBI" id="CHEBI:17544"/>
        <dbReference type="ChEBI" id="CHEBI:28938"/>
        <dbReference type="ChEBI" id="CHEBI:30616"/>
        <dbReference type="ChEBI" id="CHEBI:43474"/>
        <dbReference type="ChEBI" id="CHEBI:58228"/>
        <dbReference type="ChEBI" id="CHEBI:456216"/>
        <dbReference type="EC" id="6.3.4.16"/>
    </reaction>
</comment>
<comment type="cofactor">
    <cofactor evidence="1">
        <name>Mg(2+)</name>
        <dbReference type="ChEBI" id="CHEBI:18420"/>
    </cofactor>
    <cofactor evidence="1">
        <name>Mn(2+)</name>
        <dbReference type="ChEBI" id="CHEBI:29035"/>
    </cofactor>
    <text evidence="1">Binds 4 Mg(2+) or Mn(2+) ions per subunit.</text>
</comment>
<comment type="pathway">
    <text evidence="1">Amino-acid biosynthesis; L-arginine biosynthesis; carbamoyl phosphate from bicarbonate: step 1/1.</text>
</comment>
<comment type="pathway">
    <text evidence="1">Pyrimidine metabolism; UMP biosynthesis via de novo pathway; (S)-dihydroorotate from bicarbonate: step 1/3.</text>
</comment>
<comment type="subunit">
    <text evidence="1">Composed of two chains; the small (or glutamine) chain promotes the hydrolysis of glutamine to ammonia, which is used by the large (or ammonia) chain to synthesize carbamoyl phosphate. Tetramer of heterodimers (alpha,beta)4.</text>
</comment>
<comment type="domain">
    <text evidence="1">The large subunit is composed of 2 ATP-grasp domains that are involved in binding the 2 ATP molecules needed for carbamoyl phosphate synthesis. The N-terminal ATP-grasp domain (referred to as the carboxyphosphate synthetic component) catalyzes the ATP-dependent phosphorylation of hydrogencarbonate to carboxyphosphate and the subsequent nucleophilic attack by ammonia to form a carbamate intermediate. The C-terminal ATP-grasp domain (referred to as the carbamoyl phosphate synthetic component) then catalyzes the phosphorylation of carbamate with the second ATP to form the end product carbamoyl phosphate. The reactive and unstable enzyme intermediates are sequentially channeled from one active site to the next through the interior of the protein over a distance of at least 96 A.</text>
</comment>
<comment type="similarity">
    <text evidence="1">Belongs to the CarB family.</text>
</comment>
<gene>
    <name evidence="1" type="primary">carB</name>
    <name type="ordered locus">PF1714</name>
</gene>
<reference key="1">
    <citation type="journal article" date="1999" name="Genetics">
        <title>Divergence of the hyperthermophilic archaea Pyrococcus furiosus and P. horikoshii inferred from complete genomic sequences.</title>
        <authorList>
            <person name="Maeder D.L."/>
            <person name="Weiss R.B."/>
            <person name="Dunn D.M."/>
            <person name="Cherry J.L."/>
            <person name="Gonzalez J.M."/>
            <person name="DiRuggiero J."/>
            <person name="Robb F.T."/>
        </authorList>
    </citation>
    <scope>NUCLEOTIDE SEQUENCE [LARGE SCALE GENOMIC DNA]</scope>
    <source>
        <strain>ATCC 43587 / DSM 3638 / JCM 8422 / Vc1</strain>
    </source>
</reference>
<keyword id="KW-0028">Amino-acid biosynthesis</keyword>
<keyword id="KW-0055">Arginine biosynthesis</keyword>
<keyword id="KW-0067">ATP-binding</keyword>
<keyword id="KW-0436">Ligase</keyword>
<keyword id="KW-0460">Magnesium</keyword>
<keyword id="KW-0464">Manganese</keyword>
<keyword id="KW-0479">Metal-binding</keyword>
<keyword id="KW-0547">Nucleotide-binding</keyword>
<keyword id="KW-0665">Pyrimidine biosynthesis</keyword>
<keyword id="KW-1185">Reference proteome</keyword>
<keyword id="KW-0677">Repeat</keyword>
<organism>
    <name type="scientific">Pyrococcus furiosus (strain ATCC 43587 / DSM 3638 / JCM 8422 / Vc1)</name>
    <dbReference type="NCBI Taxonomy" id="186497"/>
    <lineage>
        <taxon>Archaea</taxon>
        <taxon>Methanobacteriati</taxon>
        <taxon>Methanobacteriota</taxon>
        <taxon>Thermococci</taxon>
        <taxon>Thermococcales</taxon>
        <taxon>Thermococcaceae</taxon>
        <taxon>Pyrococcus</taxon>
    </lineage>
</organism>
<name>CARB_PYRFU</name>
<feature type="chain" id="PRO_0000145082" description="Carbamoyl phosphate synthase large chain">
    <location>
        <begin position="1"/>
        <end position="1056"/>
    </location>
</feature>
<feature type="domain" description="ATP-grasp 1" evidence="1">
    <location>
        <begin position="131"/>
        <end position="325"/>
    </location>
</feature>
<feature type="domain" description="ATP-grasp 2" evidence="1">
    <location>
        <begin position="661"/>
        <end position="849"/>
    </location>
</feature>
<feature type="domain" description="MGS-like" evidence="1">
    <location>
        <begin position="915"/>
        <end position="1043"/>
    </location>
</feature>
<feature type="region of interest" description="Carboxyphosphate synthetic domain" evidence="1">
    <location>
        <begin position="1"/>
        <end position="399"/>
    </location>
</feature>
<feature type="region of interest" description="Oligomerization domain" evidence="1">
    <location>
        <begin position="400"/>
        <end position="536"/>
    </location>
</feature>
<feature type="region of interest" description="Carbamoyl phosphate synthetic domain" evidence="1">
    <location>
        <begin position="537"/>
        <end position="919"/>
    </location>
</feature>
<feature type="region of interest" description="Allosteric domain" evidence="1">
    <location>
        <begin position="920"/>
        <end position="1056"/>
    </location>
</feature>
<feature type="binding site" evidence="1">
    <location>
        <position position="127"/>
    </location>
    <ligand>
        <name>ATP</name>
        <dbReference type="ChEBI" id="CHEBI:30616"/>
        <label>1</label>
    </ligand>
</feature>
<feature type="binding site" evidence="1">
    <location>
        <position position="167"/>
    </location>
    <ligand>
        <name>ATP</name>
        <dbReference type="ChEBI" id="CHEBI:30616"/>
        <label>1</label>
    </ligand>
</feature>
<feature type="binding site" evidence="1">
    <location>
        <position position="173"/>
    </location>
    <ligand>
        <name>ATP</name>
        <dbReference type="ChEBI" id="CHEBI:30616"/>
        <label>1</label>
    </ligand>
</feature>
<feature type="binding site" evidence="1">
    <location>
        <position position="174"/>
    </location>
    <ligand>
        <name>ATP</name>
        <dbReference type="ChEBI" id="CHEBI:30616"/>
        <label>1</label>
    </ligand>
</feature>
<feature type="binding site" evidence="1">
    <location>
        <position position="206"/>
    </location>
    <ligand>
        <name>ATP</name>
        <dbReference type="ChEBI" id="CHEBI:30616"/>
        <label>1</label>
    </ligand>
</feature>
<feature type="binding site" evidence="1">
    <location>
        <position position="208"/>
    </location>
    <ligand>
        <name>ATP</name>
        <dbReference type="ChEBI" id="CHEBI:30616"/>
        <label>1</label>
    </ligand>
</feature>
<feature type="binding site" evidence="1">
    <location>
        <position position="213"/>
    </location>
    <ligand>
        <name>ATP</name>
        <dbReference type="ChEBI" id="CHEBI:30616"/>
        <label>1</label>
    </ligand>
</feature>
<feature type="binding site" evidence="1">
    <location>
        <position position="239"/>
    </location>
    <ligand>
        <name>ATP</name>
        <dbReference type="ChEBI" id="CHEBI:30616"/>
        <label>1</label>
    </ligand>
</feature>
<feature type="binding site" evidence="1">
    <location>
        <position position="240"/>
    </location>
    <ligand>
        <name>ATP</name>
        <dbReference type="ChEBI" id="CHEBI:30616"/>
        <label>1</label>
    </ligand>
</feature>
<feature type="binding site" evidence="1">
    <location>
        <position position="241"/>
    </location>
    <ligand>
        <name>ATP</name>
        <dbReference type="ChEBI" id="CHEBI:30616"/>
        <label>1</label>
    </ligand>
</feature>
<feature type="binding site" evidence="1">
    <location>
        <position position="282"/>
    </location>
    <ligand>
        <name>ATP</name>
        <dbReference type="ChEBI" id="CHEBI:30616"/>
        <label>1</label>
    </ligand>
</feature>
<feature type="binding site" evidence="1">
    <location>
        <position position="282"/>
    </location>
    <ligand>
        <name>Mg(2+)</name>
        <dbReference type="ChEBI" id="CHEBI:18420"/>
        <label>1</label>
    </ligand>
</feature>
<feature type="binding site" evidence="1">
    <location>
        <position position="282"/>
    </location>
    <ligand>
        <name>Mn(2+)</name>
        <dbReference type="ChEBI" id="CHEBI:29035"/>
        <label>1</label>
    </ligand>
</feature>
<feature type="binding site" evidence="1">
    <location>
        <position position="296"/>
    </location>
    <ligand>
        <name>ATP</name>
        <dbReference type="ChEBI" id="CHEBI:30616"/>
        <label>1</label>
    </ligand>
</feature>
<feature type="binding site" evidence="1">
    <location>
        <position position="296"/>
    </location>
    <ligand>
        <name>Mg(2+)</name>
        <dbReference type="ChEBI" id="CHEBI:18420"/>
        <label>1</label>
    </ligand>
</feature>
<feature type="binding site" evidence="1">
    <location>
        <position position="296"/>
    </location>
    <ligand>
        <name>Mg(2+)</name>
        <dbReference type="ChEBI" id="CHEBI:18420"/>
        <label>2</label>
    </ligand>
</feature>
<feature type="binding site" evidence="1">
    <location>
        <position position="296"/>
    </location>
    <ligand>
        <name>Mn(2+)</name>
        <dbReference type="ChEBI" id="CHEBI:29035"/>
        <label>1</label>
    </ligand>
</feature>
<feature type="binding site" evidence="1">
    <location>
        <position position="296"/>
    </location>
    <ligand>
        <name>Mn(2+)</name>
        <dbReference type="ChEBI" id="CHEBI:29035"/>
        <label>2</label>
    </ligand>
</feature>
<feature type="binding site" evidence="1">
    <location>
        <position position="298"/>
    </location>
    <ligand>
        <name>Mg(2+)</name>
        <dbReference type="ChEBI" id="CHEBI:18420"/>
        <label>2</label>
    </ligand>
</feature>
<feature type="binding site" evidence="1">
    <location>
        <position position="298"/>
    </location>
    <ligand>
        <name>Mn(2+)</name>
        <dbReference type="ChEBI" id="CHEBI:29035"/>
        <label>2</label>
    </ligand>
</feature>
<feature type="binding site" evidence="1">
    <location>
        <position position="697"/>
    </location>
    <ligand>
        <name>ATP</name>
        <dbReference type="ChEBI" id="CHEBI:30616"/>
        <label>2</label>
    </ligand>
</feature>
<feature type="binding site" evidence="1">
    <location>
        <position position="736"/>
    </location>
    <ligand>
        <name>ATP</name>
        <dbReference type="ChEBI" id="CHEBI:30616"/>
        <label>2</label>
    </ligand>
</feature>
<feature type="binding site" evidence="1">
    <location>
        <position position="738"/>
    </location>
    <ligand>
        <name>ATP</name>
        <dbReference type="ChEBI" id="CHEBI:30616"/>
        <label>2</label>
    </ligand>
</feature>
<feature type="binding site" evidence="1">
    <location>
        <position position="742"/>
    </location>
    <ligand>
        <name>ATP</name>
        <dbReference type="ChEBI" id="CHEBI:30616"/>
        <label>2</label>
    </ligand>
</feature>
<feature type="binding site" evidence="1">
    <location>
        <position position="766"/>
    </location>
    <ligand>
        <name>ATP</name>
        <dbReference type="ChEBI" id="CHEBI:30616"/>
        <label>2</label>
    </ligand>
</feature>
<feature type="binding site" evidence="1">
    <location>
        <position position="767"/>
    </location>
    <ligand>
        <name>ATP</name>
        <dbReference type="ChEBI" id="CHEBI:30616"/>
        <label>2</label>
    </ligand>
</feature>
<feature type="binding site" evidence="1">
    <location>
        <position position="768"/>
    </location>
    <ligand>
        <name>ATP</name>
        <dbReference type="ChEBI" id="CHEBI:30616"/>
        <label>2</label>
    </ligand>
</feature>
<feature type="binding site" evidence="1">
    <location>
        <position position="769"/>
    </location>
    <ligand>
        <name>ATP</name>
        <dbReference type="ChEBI" id="CHEBI:30616"/>
        <label>2</label>
    </ligand>
</feature>
<feature type="binding site" evidence="1">
    <location>
        <position position="809"/>
    </location>
    <ligand>
        <name>ATP</name>
        <dbReference type="ChEBI" id="CHEBI:30616"/>
        <label>2</label>
    </ligand>
</feature>
<feature type="binding site" evidence="1">
    <location>
        <position position="809"/>
    </location>
    <ligand>
        <name>Mg(2+)</name>
        <dbReference type="ChEBI" id="CHEBI:18420"/>
        <label>3</label>
    </ligand>
</feature>
<feature type="binding site" evidence="1">
    <location>
        <position position="809"/>
    </location>
    <ligand>
        <name>Mn(2+)</name>
        <dbReference type="ChEBI" id="CHEBI:29035"/>
        <label>3</label>
    </ligand>
</feature>
<feature type="binding site" evidence="1">
    <location>
        <position position="820"/>
    </location>
    <ligand>
        <name>ATP</name>
        <dbReference type="ChEBI" id="CHEBI:30616"/>
        <label>2</label>
    </ligand>
</feature>
<feature type="binding site" evidence="1">
    <location>
        <position position="820"/>
    </location>
    <ligand>
        <name>Mg(2+)</name>
        <dbReference type="ChEBI" id="CHEBI:18420"/>
        <label>3</label>
    </ligand>
</feature>
<feature type="binding site" evidence="1">
    <location>
        <position position="820"/>
    </location>
    <ligand>
        <name>Mg(2+)</name>
        <dbReference type="ChEBI" id="CHEBI:18420"/>
        <label>4</label>
    </ligand>
</feature>
<feature type="binding site" evidence="1">
    <location>
        <position position="820"/>
    </location>
    <ligand>
        <name>Mn(2+)</name>
        <dbReference type="ChEBI" id="CHEBI:29035"/>
        <label>3</label>
    </ligand>
</feature>
<feature type="binding site" evidence="1">
    <location>
        <position position="820"/>
    </location>
    <ligand>
        <name>Mn(2+)</name>
        <dbReference type="ChEBI" id="CHEBI:29035"/>
        <label>4</label>
    </ligand>
</feature>
<feature type="binding site" evidence="1">
    <location>
        <position position="822"/>
    </location>
    <ligand>
        <name>Mg(2+)</name>
        <dbReference type="ChEBI" id="CHEBI:18420"/>
        <label>4</label>
    </ligand>
</feature>
<feature type="binding site" evidence="1">
    <location>
        <position position="822"/>
    </location>
    <ligand>
        <name>Mn(2+)</name>
        <dbReference type="ChEBI" id="CHEBI:29035"/>
        <label>4</label>
    </ligand>
</feature>
<protein>
    <recommendedName>
        <fullName evidence="1">Carbamoyl phosphate synthase large chain</fullName>
        <ecNumber evidence="1">6.3.4.16</ecNumber>
        <ecNumber evidence="1">6.3.5.5</ecNumber>
    </recommendedName>
    <alternativeName>
        <fullName evidence="1">Carbamoyl phosphate synthetase ammonia chain</fullName>
    </alternativeName>
</protein>
<sequence length="1056" mass="118057">MKIDVSKVIVIGSGAIKIGEAAEFDYSGSQALKALREEGIESVLVNPNVATIQTSYELADKVYLLPLKTEFIEKVIEKEKPDGILVGFGGQTALSLGVSLYKKGILDKYNVKVLGTPIEGIERALDREKFQKTMKKVGLPVPPSDAAKTPEEAIEIAESIGFPVIVRVSFNLGGRGSFIARSREEFEKYIIRAFAQSEIRKVLVEKYLNGWKEIEFEVVRDKAGNSVAVVCLENVDPMGVHTGESIVVGPSQTLTNREYQMLRDAAIRVADAIELIGEGNVQLALSPNSEEYYVIETNPRMSRSSALASKVTGYPLAYIATKLAIGYTLDELRNTVTGITTAAFEPSLDYVAVKIPRWDFKKFEEVNKSIGSEMKSIGEVMAIGRNLHEAFQKAIRMLDIGDELIGKYYLEDEPLENVLERLKKKEPYLLMHIAKALRLGATVEDIHKITKVDKFFIYVIEDLVKIAEELRKNPTEELIREAKRLGFSDWEIELLTKRKVKKKWKPVVKNIDTLAGEFPAKTNYLYVTYDGVENDIPKPKKPSILVLGAGVFRIGVSVEFDWAVVNFVNAIRKRGIEAAILNYNPETVSTDWDMSDRLYFEEITLERVLDIYEFERPIGVVAFAGGQLANSLAKKLENAGVKLLGTSGKSVDKAENRAKFSKLLEKLGIPQPEWISAESIDEAIKLAKKIEYPVIVRPSYVLSGTAMKVAWNEKELIDFLKEAASVSPEHPVLISKFIPGTEAEIDAVSDGKKVVGVTLEHIEGAGVHSGDSTMVTPWRTLSERNVKRIWEITYELAKELEIKGPFNVQFVIDKKPYVLELNLRTSRSMPFSSKSRGVNLMELSAQAVLDGELKIGVEGKYYEIPPVAYGVKSPQFSWAQLQGAYPFLGPEMRSTGEVAALGTHYEDALLKSWLSVKPNELPKTSALIYGWEKKNILKETAKILENLGITTYSIGGDIGEINISKQEAVNMIKEGKIDIIMTTGYAKDKDYEIRRLAADLNVPLVLDANLALELAKAIEWKTKTQEEFEIKELREYWIRKIEENVEEYAASVVLRR</sequence>
<proteinExistence type="inferred from homology"/>
<evidence type="ECO:0000255" key="1">
    <source>
        <dbReference type="HAMAP-Rule" id="MF_01210"/>
    </source>
</evidence>
<dbReference type="EC" id="6.3.4.16" evidence="1"/>
<dbReference type="EC" id="6.3.5.5" evidence="1"/>
<dbReference type="EMBL" id="AE009950">
    <property type="protein sequence ID" value="AAL81838.1"/>
    <property type="molecule type" value="Genomic_DNA"/>
</dbReference>
<dbReference type="RefSeq" id="WP_011012860.1">
    <property type="nucleotide sequence ID" value="NZ_CP023154.1"/>
</dbReference>
<dbReference type="SMR" id="Q8U085"/>
<dbReference type="STRING" id="186497.PF1714"/>
<dbReference type="PaxDb" id="186497-PF1714"/>
<dbReference type="GeneID" id="41713545"/>
<dbReference type="KEGG" id="pfu:PF1714"/>
<dbReference type="PATRIC" id="fig|186497.12.peg.1782"/>
<dbReference type="eggNOG" id="arCOG01594">
    <property type="taxonomic scope" value="Archaea"/>
</dbReference>
<dbReference type="HOGENOM" id="CLU_000513_1_3_2"/>
<dbReference type="OrthoDB" id="85487at2157"/>
<dbReference type="PhylomeDB" id="Q8U085"/>
<dbReference type="UniPathway" id="UPA00068">
    <property type="reaction ID" value="UER00171"/>
</dbReference>
<dbReference type="UniPathway" id="UPA00070">
    <property type="reaction ID" value="UER00115"/>
</dbReference>
<dbReference type="Proteomes" id="UP000001013">
    <property type="component" value="Chromosome"/>
</dbReference>
<dbReference type="GO" id="GO:0005737">
    <property type="term" value="C:cytoplasm"/>
    <property type="evidence" value="ECO:0007669"/>
    <property type="project" value="TreeGrafter"/>
</dbReference>
<dbReference type="GO" id="GO:0005524">
    <property type="term" value="F:ATP binding"/>
    <property type="evidence" value="ECO:0007669"/>
    <property type="project" value="UniProtKB-UniRule"/>
</dbReference>
<dbReference type="GO" id="GO:0004087">
    <property type="term" value="F:carbamoyl-phosphate synthase (ammonia) activity"/>
    <property type="evidence" value="ECO:0007669"/>
    <property type="project" value="RHEA"/>
</dbReference>
<dbReference type="GO" id="GO:0004088">
    <property type="term" value="F:carbamoyl-phosphate synthase (glutamine-hydrolyzing) activity"/>
    <property type="evidence" value="ECO:0007669"/>
    <property type="project" value="UniProtKB-UniRule"/>
</dbReference>
<dbReference type="GO" id="GO:0046872">
    <property type="term" value="F:metal ion binding"/>
    <property type="evidence" value="ECO:0007669"/>
    <property type="project" value="UniProtKB-KW"/>
</dbReference>
<dbReference type="GO" id="GO:0044205">
    <property type="term" value="P:'de novo' UMP biosynthetic process"/>
    <property type="evidence" value="ECO:0007669"/>
    <property type="project" value="UniProtKB-UniRule"/>
</dbReference>
<dbReference type="GO" id="GO:0006541">
    <property type="term" value="P:glutamine metabolic process"/>
    <property type="evidence" value="ECO:0007669"/>
    <property type="project" value="TreeGrafter"/>
</dbReference>
<dbReference type="GO" id="GO:0006526">
    <property type="term" value="P:L-arginine biosynthetic process"/>
    <property type="evidence" value="ECO:0007669"/>
    <property type="project" value="UniProtKB-UniRule"/>
</dbReference>
<dbReference type="FunFam" id="3.30.1490.20:FF:000001">
    <property type="entry name" value="Carbamoyl-phosphate synthase large chain"/>
    <property type="match status" value="1"/>
</dbReference>
<dbReference type="FunFam" id="3.30.470.20:FF:000001">
    <property type="entry name" value="Carbamoyl-phosphate synthase large chain"/>
    <property type="match status" value="1"/>
</dbReference>
<dbReference type="FunFam" id="3.30.470.20:FF:000026">
    <property type="entry name" value="Carbamoyl-phosphate synthase large chain"/>
    <property type="match status" value="1"/>
</dbReference>
<dbReference type="FunFam" id="3.40.50.20:FF:000001">
    <property type="entry name" value="Carbamoyl-phosphate synthase large chain"/>
    <property type="match status" value="1"/>
</dbReference>
<dbReference type="FunFam" id="3.40.50.20:FF:000002">
    <property type="entry name" value="Carbamoyl-phosphate synthase large chain"/>
    <property type="match status" value="1"/>
</dbReference>
<dbReference type="Gene3D" id="3.40.50.20">
    <property type="match status" value="2"/>
</dbReference>
<dbReference type="Gene3D" id="3.30.1490.20">
    <property type="entry name" value="ATP-grasp fold, A domain"/>
    <property type="match status" value="1"/>
</dbReference>
<dbReference type="Gene3D" id="3.30.470.20">
    <property type="entry name" value="ATP-grasp fold, B domain"/>
    <property type="match status" value="2"/>
</dbReference>
<dbReference type="Gene3D" id="1.10.1030.10">
    <property type="entry name" value="Carbamoyl-phosphate synthetase, large subunit oligomerisation domain"/>
    <property type="match status" value="1"/>
</dbReference>
<dbReference type="Gene3D" id="3.40.50.1380">
    <property type="entry name" value="Methylglyoxal synthase-like domain"/>
    <property type="match status" value="1"/>
</dbReference>
<dbReference type="HAMAP" id="MF_01210_A">
    <property type="entry name" value="CPSase_L_chain_A"/>
    <property type="match status" value="1"/>
</dbReference>
<dbReference type="InterPro" id="IPR011761">
    <property type="entry name" value="ATP-grasp"/>
</dbReference>
<dbReference type="InterPro" id="IPR013815">
    <property type="entry name" value="ATP_grasp_subdomain_1"/>
</dbReference>
<dbReference type="InterPro" id="IPR006275">
    <property type="entry name" value="CarbamoylP_synth_lsu"/>
</dbReference>
<dbReference type="InterPro" id="IPR005480">
    <property type="entry name" value="CarbamoylP_synth_lsu_oligo"/>
</dbReference>
<dbReference type="InterPro" id="IPR036897">
    <property type="entry name" value="CarbamoylP_synth_lsu_oligo_sf"/>
</dbReference>
<dbReference type="InterPro" id="IPR005479">
    <property type="entry name" value="CbamoylP_synth_lsu-like_ATP-bd"/>
</dbReference>
<dbReference type="InterPro" id="IPR005483">
    <property type="entry name" value="CbamoylP_synth_lsu_CPSase_dom"/>
</dbReference>
<dbReference type="InterPro" id="IPR011607">
    <property type="entry name" value="MGS-like_dom"/>
</dbReference>
<dbReference type="InterPro" id="IPR036914">
    <property type="entry name" value="MGS-like_dom_sf"/>
</dbReference>
<dbReference type="InterPro" id="IPR016185">
    <property type="entry name" value="PreATP-grasp_dom_sf"/>
</dbReference>
<dbReference type="NCBIfam" id="TIGR01369">
    <property type="entry name" value="CPSaseII_lrg"/>
    <property type="match status" value="1"/>
</dbReference>
<dbReference type="NCBIfam" id="NF003671">
    <property type="entry name" value="PRK05294.1"/>
    <property type="match status" value="1"/>
</dbReference>
<dbReference type="NCBIfam" id="NF009455">
    <property type="entry name" value="PRK12815.1"/>
    <property type="match status" value="1"/>
</dbReference>
<dbReference type="PANTHER" id="PTHR11405:SF53">
    <property type="entry name" value="CARBAMOYL-PHOSPHATE SYNTHASE [AMMONIA], MITOCHONDRIAL"/>
    <property type="match status" value="1"/>
</dbReference>
<dbReference type="PANTHER" id="PTHR11405">
    <property type="entry name" value="CARBAMOYLTRANSFERASE FAMILY MEMBER"/>
    <property type="match status" value="1"/>
</dbReference>
<dbReference type="Pfam" id="PF02786">
    <property type="entry name" value="CPSase_L_D2"/>
    <property type="match status" value="2"/>
</dbReference>
<dbReference type="Pfam" id="PF02787">
    <property type="entry name" value="CPSase_L_D3"/>
    <property type="match status" value="1"/>
</dbReference>
<dbReference type="PRINTS" id="PR00098">
    <property type="entry name" value="CPSASE"/>
</dbReference>
<dbReference type="SMART" id="SM01096">
    <property type="entry name" value="CPSase_L_D3"/>
    <property type="match status" value="1"/>
</dbReference>
<dbReference type="SMART" id="SM00851">
    <property type="entry name" value="MGS"/>
    <property type="match status" value="1"/>
</dbReference>
<dbReference type="SUPFAM" id="SSF48108">
    <property type="entry name" value="Carbamoyl phosphate synthetase, large subunit connection domain"/>
    <property type="match status" value="1"/>
</dbReference>
<dbReference type="SUPFAM" id="SSF56059">
    <property type="entry name" value="Glutathione synthetase ATP-binding domain-like"/>
    <property type="match status" value="2"/>
</dbReference>
<dbReference type="SUPFAM" id="SSF52335">
    <property type="entry name" value="Methylglyoxal synthase-like"/>
    <property type="match status" value="1"/>
</dbReference>
<dbReference type="SUPFAM" id="SSF52440">
    <property type="entry name" value="PreATP-grasp domain"/>
    <property type="match status" value="2"/>
</dbReference>
<dbReference type="PROSITE" id="PS50975">
    <property type="entry name" value="ATP_GRASP"/>
    <property type="match status" value="2"/>
</dbReference>
<dbReference type="PROSITE" id="PS00866">
    <property type="entry name" value="CPSASE_1"/>
    <property type="match status" value="1"/>
</dbReference>
<dbReference type="PROSITE" id="PS00867">
    <property type="entry name" value="CPSASE_2"/>
    <property type="match status" value="1"/>
</dbReference>
<dbReference type="PROSITE" id="PS51855">
    <property type="entry name" value="MGS"/>
    <property type="match status" value="1"/>
</dbReference>